<keyword id="KW-0131">Cell cycle</keyword>
<keyword id="KW-0132">Cell division</keyword>
<keyword id="KW-1185">Reference proteome</keyword>
<protein>
    <recommendedName>
        <fullName evidence="1">Cell division topological specificity factor</fullName>
    </recommendedName>
</protein>
<name>MINE_ALBFT</name>
<organism>
    <name type="scientific">Albidiferax ferrireducens (strain ATCC BAA-621 / DSM 15236 / T118)</name>
    <name type="common">Rhodoferax ferrireducens</name>
    <dbReference type="NCBI Taxonomy" id="338969"/>
    <lineage>
        <taxon>Bacteria</taxon>
        <taxon>Pseudomonadati</taxon>
        <taxon>Pseudomonadota</taxon>
        <taxon>Betaproteobacteria</taxon>
        <taxon>Burkholderiales</taxon>
        <taxon>Comamonadaceae</taxon>
        <taxon>Rhodoferax</taxon>
    </lineage>
</organism>
<comment type="function">
    <text evidence="1">Prevents the cell division inhibition by proteins MinC and MinD at internal division sites while permitting inhibition at polar sites. This ensures cell division at the proper site by restricting the formation of a division septum at the midpoint of the long axis of the cell.</text>
</comment>
<comment type="similarity">
    <text evidence="1">Belongs to the MinE family.</text>
</comment>
<accession>Q223G5</accession>
<gene>
    <name evidence="1" type="primary">minE</name>
    <name type="ordered locus">Rfer_0034</name>
</gene>
<proteinExistence type="inferred from homology"/>
<dbReference type="EMBL" id="CP000267">
    <property type="protein sequence ID" value="ABD67796.1"/>
    <property type="molecule type" value="Genomic_DNA"/>
</dbReference>
<dbReference type="RefSeq" id="WP_011462369.1">
    <property type="nucleotide sequence ID" value="NC_007908.1"/>
</dbReference>
<dbReference type="SMR" id="Q223G5"/>
<dbReference type="STRING" id="338969.Rfer_0034"/>
<dbReference type="KEGG" id="rfr:Rfer_0034"/>
<dbReference type="eggNOG" id="COG0851">
    <property type="taxonomic scope" value="Bacteria"/>
</dbReference>
<dbReference type="HOGENOM" id="CLU_137929_2_1_4"/>
<dbReference type="OrthoDB" id="9802655at2"/>
<dbReference type="Proteomes" id="UP000008332">
    <property type="component" value="Chromosome"/>
</dbReference>
<dbReference type="GO" id="GO:0051301">
    <property type="term" value="P:cell division"/>
    <property type="evidence" value="ECO:0007669"/>
    <property type="project" value="UniProtKB-KW"/>
</dbReference>
<dbReference type="GO" id="GO:0032955">
    <property type="term" value="P:regulation of division septum assembly"/>
    <property type="evidence" value="ECO:0007669"/>
    <property type="project" value="InterPro"/>
</dbReference>
<dbReference type="FunFam" id="3.30.1070.10:FF:000001">
    <property type="entry name" value="Cell division topological specificity factor"/>
    <property type="match status" value="1"/>
</dbReference>
<dbReference type="Gene3D" id="3.30.1070.10">
    <property type="entry name" value="Cell division topological specificity factor MinE"/>
    <property type="match status" value="1"/>
</dbReference>
<dbReference type="HAMAP" id="MF_00262">
    <property type="entry name" value="MinE"/>
    <property type="match status" value="1"/>
</dbReference>
<dbReference type="InterPro" id="IPR005527">
    <property type="entry name" value="MinE"/>
</dbReference>
<dbReference type="InterPro" id="IPR036707">
    <property type="entry name" value="MinE_sf"/>
</dbReference>
<dbReference type="NCBIfam" id="TIGR01215">
    <property type="entry name" value="minE"/>
    <property type="match status" value="1"/>
</dbReference>
<dbReference type="NCBIfam" id="NF001422">
    <property type="entry name" value="PRK00296.1"/>
    <property type="match status" value="1"/>
</dbReference>
<dbReference type="NCBIfam" id="NF010595">
    <property type="entry name" value="PRK13989.1"/>
    <property type="match status" value="1"/>
</dbReference>
<dbReference type="Pfam" id="PF03776">
    <property type="entry name" value="MinE"/>
    <property type="match status" value="1"/>
</dbReference>
<dbReference type="SUPFAM" id="SSF55229">
    <property type="entry name" value="Cell division protein MinE topological specificity domain"/>
    <property type="match status" value="1"/>
</dbReference>
<reference key="1">
    <citation type="submission" date="2006-02" db="EMBL/GenBank/DDBJ databases">
        <title>Complete sequence of chromosome of Rhodoferax ferrireducens DSM 15236.</title>
        <authorList>
            <person name="Copeland A."/>
            <person name="Lucas S."/>
            <person name="Lapidus A."/>
            <person name="Barry K."/>
            <person name="Detter J.C."/>
            <person name="Glavina del Rio T."/>
            <person name="Hammon N."/>
            <person name="Israni S."/>
            <person name="Pitluck S."/>
            <person name="Brettin T."/>
            <person name="Bruce D."/>
            <person name="Han C."/>
            <person name="Tapia R."/>
            <person name="Gilna P."/>
            <person name="Kiss H."/>
            <person name="Schmutz J."/>
            <person name="Larimer F."/>
            <person name="Land M."/>
            <person name="Kyrpides N."/>
            <person name="Ivanova N."/>
            <person name="Richardson P."/>
        </authorList>
    </citation>
    <scope>NUCLEOTIDE SEQUENCE [LARGE SCALE GENOMIC DNA]</scope>
    <source>
        <strain>ATCC BAA-621 / DSM 15236 / T118</strain>
    </source>
</reference>
<sequence>MSFFSFFVGEKKKSASVAKERLQIILAHERSGRNAAEPDYLPALQRELMAVISKYVKINLEDIKVNVERQDDLEVLEVKIELPDSR</sequence>
<feature type="chain" id="PRO_0000298176" description="Cell division topological specificity factor">
    <location>
        <begin position="1"/>
        <end position="86"/>
    </location>
</feature>
<evidence type="ECO:0000255" key="1">
    <source>
        <dbReference type="HAMAP-Rule" id="MF_00262"/>
    </source>
</evidence>